<feature type="chain" id="PRO_1000125078" description="Phosphoenolpyruvate carboxykinase (ATP)">
    <location>
        <begin position="1"/>
        <end position="537"/>
    </location>
</feature>
<feature type="binding site" evidence="1">
    <location>
        <position position="61"/>
    </location>
    <ligand>
        <name>substrate</name>
    </ligand>
</feature>
<feature type="binding site" evidence="1">
    <location>
        <position position="195"/>
    </location>
    <ligand>
        <name>substrate</name>
    </ligand>
</feature>
<feature type="binding site" evidence="1">
    <location>
        <position position="201"/>
    </location>
    <ligand>
        <name>ATP</name>
        <dbReference type="ChEBI" id="CHEBI:30616"/>
    </ligand>
</feature>
<feature type="binding site" evidence="1">
    <location>
        <position position="201"/>
    </location>
    <ligand>
        <name>Mn(2+)</name>
        <dbReference type="ChEBI" id="CHEBI:29035"/>
    </ligand>
</feature>
<feature type="binding site" evidence="1">
    <location>
        <position position="201"/>
    </location>
    <ligand>
        <name>substrate</name>
    </ligand>
</feature>
<feature type="binding site" evidence="1">
    <location>
        <position position="220"/>
    </location>
    <ligand>
        <name>ATP</name>
        <dbReference type="ChEBI" id="CHEBI:30616"/>
    </ligand>
</feature>
<feature type="binding site" evidence="1">
    <location>
        <position position="220"/>
    </location>
    <ligand>
        <name>Mn(2+)</name>
        <dbReference type="ChEBI" id="CHEBI:29035"/>
    </ligand>
</feature>
<feature type="binding site" evidence="1">
    <location>
        <begin position="236"/>
        <end position="244"/>
    </location>
    <ligand>
        <name>ATP</name>
        <dbReference type="ChEBI" id="CHEBI:30616"/>
    </ligand>
</feature>
<feature type="binding site" evidence="1">
    <location>
        <position position="257"/>
    </location>
    <ligand>
        <name>Mn(2+)</name>
        <dbReference type="ChEBI" id="CHEBI:29035"/>
    </ligand>
</feature>
<feature type="binding site" evidence="1">
    <location>
        <position position="285"/>
    </location>
    <ligand>
        <name>ATP</name>
        <dbReference type="ChEBI" id="CHEBI:30616"/>
    </ligand>
</feature>
<feature type="binding site" evidence="1">
    <location>
        <position position="323"/>
    </location>
    <ligand>
        <name>ATP</name>
        <dbReference type="ChEBI" id="CHEBI:30616"/>
    </ligand>
</feature>
<feature type="binding site" evidence="1">
    <location>
        <position position="323"/>
    </location>
    <ligand>
        <name>substrate</name>
    </ligand>
</feature>
<feature type="binding site" evidence="1">
    <location>
        <position position="448"/>
    </location>
    <ligand>
        <name>ATP</name>
        <dbReference type="ChEBI" id="CHEBI:30616"/>
    </ligand>
</feature>
<reference key="1">
    <citation type="journal article" date="2011" name="Stand. Genomic Sci.">
        <title>Complete genome sequence of Parvibaculum lavamentivorans type strain (DS-1(T)).</title>
        <authorList>
            <person name="Schleheck D."/>
            <person name="Weiss M."/>
            <person name="Pitluck S."/>
            <person name="Bruce D."/>
            <person name="Land M.L."/>
            <person name="Han S."/>
            <person name="Saunders E."/>
            <person name="Tapia R."/>
            <person name="Detter C."/>
            <person name="Brettin T."/>
            <person name="Han J."/>
            <person name="Woyke T."/>
            <person name="Goodwin L."/>
            <person name="Pennacchio L."/>
            <person name="Nolan M."/>
            <person name="Cook A.M."/>
            <person name="Kjelleberg S."/>
            <person name="Thomas T."/>
        </authorList>
    </citation>
    <scope>NUCLEOTIDE SEQUENCE [LARGE SCALE GENOMIC DNA]</scope>
    <source>
        <strain>DS-1 / DSM 13023 / NCIMB 13966</strain>
    </source>
</reference>
<evidence type="ECO:0000255" key="1">
    <source>
        <dbReference type="HAMAP-Rule" id="MF_00453"/>
    </source>
</evidence>
<proteinExistence type="inferred from homology"/>
<comment type="function">
    <text evidence="1">Involved in the gluconeogenesis. Catalyzes the conversion of oxaloacetate (OAA) to phosphoenolpyruvate (PEP) through direct phosphoryl transfer between the nucleoside triphosphate and OAA.</text>
</comment>
<comment type="catalytic activity">
    <reaction evidence="1">
        <text>oxaloacetate + ATP = phosphoenolpyruvate + ADP + CO2</text>
        <dbReference type="Rhea" id="RHEA:18617"/>
        <dbReference type="ChEBI" id="CHEBI:16452"/>
        <dbReference type="ChEBI" id="CHEBI:16526"/>
        <dbReference type="ChEBI" id="CHEBI:30616"/>
        <dbReference type="ChEBI" id="CHEBI:58702"/>
        <dbReference type="ChEBI" id="CHEBI:456216"/>
        <dbReference type="EC" id="4.1.1.49"/>
    </reaction>
</comment>
<comment type="cofactor">
    <cofactor evidence="1">
        <name>Mn(2+)</name>
        <dbReference type="ChEBI" id="CHEBI:29035"/>
    </cofactor>
    <text evidence="1">Binds 1 Mn(2+) ion per subunit.</text>
</comment>
<comment type="pathway">
    <text evidence="1">Carbohydrate biosynthesis; gluconeogenesis.</text>
</comment>
<comment type="subcellular location">
    <subcellularLocation>
        <location evidence="1">Cytoplasm</location>
    </subcellularLocation>
</comment>
<comment type="similarity">
    <text evidence="1">Belongs to the phosphoenolpyruvate carboxykinase (ATP) family.</text>
</comment>
<sequence>MKQTGPYISKNGADKSGFKNLAATHWNYRPAALYEEAIRRGEGHVAANGPFVVKTGVHTGRSAKDKFIVRDASTEKTVWWDNNKSMTPEAFDLLHADMLKHAEGKELFIQDLFGGADQTHRLATRIYTEYAWHSLFIQNLLIEPKPEELGSFDPQFTIIDLPSFEADPEKYGVRTGTVIACNFAKRIVLIAGTSYAGEIKKSVFSMLNYELPPKRVMPMHCSANVGEEGDTAIFFGLSGTGKTTLSAVATRTLIGDDEHGWSENGVFNFEGGCYAKMIKLSAEAEPEIYAVTRRFGTVLENVVMDENTRELDLDSAALAENSRGAYPLSFIPNASATGRAPHPKNIIMLTADAFSVLPPVARLTPSQAMYHFLSGYTAKVAGTEKGVTEPEATFSTCFGAPFMSRHPTEYGNLLRDLIAQHKVSCWLVNTGWTGGVYGTGNRMPIKATRALLAAALDGSLNNVEFRTDPNFGFEVPVDVPGVDNKILNPRETWADKAAYDAQAQKLVKMFIENFAKFEAHVDPDVRAAAPAAARAAE</sequence>
<dbReference type="EC" id="4.1.1.49" evidence="1"/>
<dbReference type="EMBL" id="CP000774">
    <property type="protein sequence ID" value="ABS61732.1"/>
    <property type="molecule type" value="Genomic_DNA"/>
</dbReference>
<dbReference type="RefSeq" id="WP_011995023.1">
    <property type="nucleotide sequence ID" value="NC_009719.1"/>
</dbReference>
<dbReference type="SMR" id="A7HP99"/>
<dbReference type="STRING" id="402881.Plav_0109"/>
<dbReference type="KEGG" id="pla:Plav_0109"/>
<dbReference type="eggNOG" id="COG1866">
    <property type="taxonomic scope" value="Bacteria"/>
</dbReference>
<dbReference type="HOGENOM" id="CLU_018247_0_1_5"/>
<dbReference type="OrthoDB" id="9806325at2"/>
<dbReference type="UniPathway" id="UPA00138"/>
<dbReference type="Proteomes" id="UP000006377">
    <property type="component" value="Chromosome"/>
</dbReference>
<dbReference type="GO" id="GO:0005829">
    <property type="term" value="C:cytosol"/>
    <property type="evidence" value="ECO:0007669"/>
    <property type="project" value="TreeGrafter"/>
</dbReference>
<dbReference type="GO" id="GO:0005524">
    <property type="term" value="F:ATP binding"/>
    <property type="evidence" value="ECO:0007669"/>
    <property type="project" value="UniProtKB-UniRule"/>
</dbReference>
<dbReference type="GO" id="GO:0046872">
    <property type="term" value="F:metal ion binding"/>
    <property type="evidence" value="ECO:0007669"/>
    <property type="project" value="UniProtKB-KW"/>
</dbReference>
<dbReference type="GO" id="GO:0004612">
    <property type="term" value="F:phosphoenolpyruvate carboxykinase (ATP) activity"/>
    <property type="evidence" value="ECO:0007669"/>
    <property type="project" value="UniProtKB-UniRule"/>
</dbReference>
<dbReference type="GO" id="GO:0006094">
    <property type="term" value="P:gluconeogenesis"/>
    <property type="evidence" value="ECO:0007669"/>
    <property type="project" value="UniProtKB-UniRule"/>
</dbReference>
<dbReference type="CDD" id="cd00484">
    <property type="entry name" value="PEPCK_ATP"/>
    <property type="match status" value="1"/>
</dbReference>
<dbReference type="Gene3D" id="3.90.228.20">
    <property type="match status" value="1"/>
</dbReference>
<dbReference type="Gene3D" id="3.40.449.10">
    <property type="entry name" value="Phosphoenolpyruvate Carboxykinase, domain 1"/>
    <property type="match status" value="1"/>
</dbReference>
<dbReference type="Gene3D" id="2.170.8.10">
    <property type="entry name" value="Phosphoenolpyruvate Carboxykinase, domain 2"/>
    <property type="match status" value="1"/>
</dbReference>
<dbReference type="HAMAP" id="MF_00453">
    <property type="entry name" value="PEPCK_ATP"/>
    <property type="match status" value="1"/>
</dbReference>
<dbReference type="InterPro" id="IPR001272">
    <property type="entry name" value="PEP_carboxykinase_ATP"/>
</dbReference>
<dbReference type="InterPro" id="IPR013035">
    <property type="entry name" value="PEP_carboxykinase_C"/>
</dbReference>
<dbReference type="InterPro" id="IPR008210">
    <property type="entry name" value="PEP_carboxykinase_N"/>
</dbReference>
<dbReference type="InterPro" id="IPR015994">
    <property type="entry name" value="PEPCK_ATP_CS"/>
</dbReference>
<dbReference type="NCBIfam" id="TIGR00224">
    <property type="entry name" value="pckA"/>
    <property type="match status" value="1"/>
</dbReference>
<dbReference type="NCBIfam" id="NF006820">
    <property type="entry name" value="PRK09344.1-2"/>
    <property type="match status" value="1"/>
</dbReference>
<dbReference type="NCBIfam" id="NF006821">
    <property type="entry name" value="PRK09344.1-3"/>
    <property type="match status" value="1"/>
</dbReference>
<dbReference type="NCBIfam" id="NF006822">
    <property type="entry name" value="PRK09344.1-4"/>
    <property type="match status" value="1"/>
</dbReference>
<dbReference type="PANTHER" id="PTHR30031:SF0">
    <property type="entry name" value="PHOSPHOENOLPYRUVATE CARBOXYKINASE (ATP)"/>
    <property type="match status" value="1"/>
</dbReference>
<dbReference type="PANTHER" id="PTHR30031">
    <property type="entry name" value="PHOSPHOENOLPYRUVATE CARBOXYKINASE ATP"/>
    <property type="match status" value="1"/>
</dbReference>
<dbReference type="Pfam" id="PF01293">
    <property type="entry name" value="PEPCK_ATP"/>
    <property type="match status" value="1"/>
</dbReference>
<dbReference type="PIRSF" id="PIRSF006294">
    <property type="entry name" value="PEP_crbxkin"/>
    <property type="match status" value="1"/>
</dbReference>
<dbReference type="SUPFAM" id="SSF68923">
    <property type="entry name" value="PEP carboxykinase N-terminal domain"/>
    <property type="match status" value="1"/>
</dbReference>
<dbReference type="SUPFAM" id="SSF53795">
    <property type="entry name" value="PEP carboxykinase-like"/>
    <property type="match status" value="1"/>
</dbReference>
<dbReference type="PROSITE" id="PS00532">
    <property type="entry name" value="PEPCK_ATP"/>
    <property type="match status" value="1"/>
</dbReference>
<gene>
    <name evidence="1" type="primary">pckA</name>
    <name type="ordered locus">Plav_0109</name>
</gene>
<organism>
    <name type="scientific">Parvibaculum lavamentivorans (strain DS-1 / DSM 13023 / NCIMB 13966)</name>
    <dbReference type="NCBI Taxonomy" id="402881"/>
    <lineage>
        <taxon>Bacteria</taxon>
        <taxon>Pseudomonadati</taxon>
        <taxon>Pseudomonadota</taxon>
        <taxon>Alphaproteobacteria</taxon>
        <taxon>Hyphomicrobiales</taxon>
        <taxon>Parvibaculaceae</taxon>
        <taxon>Parvibaculum</taxon>
    </lineage>
</organism>
<protein>
    <recommendedName>
        <fullName evidence="1">Phosphoenolpyruvate carboxykinase (ATP)</fullName>
        <shortName evidence="1">PCK</shortName>
        <shortName evidence="1">PEP carboxykinase</shortName>
        <shortName evidence="1">PEPCK</shortName>
        <ecNumber evidence="1">4.1.1.49</ecNumber>
    </recommendedName>
</protein>
<name>PCKA_PARL1</name>
<accession>A7HP99</accession>
<keyword id="KW-0067">ATP-binding</keyword>
<keyword id="KW-0963">Cytoplasm</keyword>
<keyword id="KW-0210">Decarboxylase</keyword>
<keyword id="KW-0312">Gluconeogenesis</keyword>
<keyword id="KW-0456">Lyase</keyword>
<keyword id="KW-0464">Manganese</keyword>
<keyword id="KW-0479">Metal-binding</keyword>
<keyword id="KW-0547">Nucleotide-binding</keyword>
<keyword id="KW-1185">Reference proteome</keyword>